<comment type="function">
    <text evidence="2">Monomeric globin with a bis-histidyl six-coordinate heme-iron atom through which it can bind dioxygen, carbon monoxide and nitric oxide. Could help transport oxygen and increase its availability to the metabolically active neuronal tissues, though its low quantity in tissues as well as its high affinity for dioxygen, which may limit its oxygen-releasing ability, argue against it. The ferrous/deoxygenated form exhibits a nitrite reductase activity and it could produce nitric oxide which in turn inhibits cellular respiration in response to hypoxia. In its ferrous/deoxygenated state, it may also exhibit GDI (Guanine nucleotide Dissociation Inhibitor) activity toward heterotrimeric G-alpha proteins, thereby regulating signal transduction to facilitate neuroprotective responses in the wake of hypoxia and associated oxidative stress.</text>
</comment>
<comment type="catalytic activity">
    <reaction evidence="2">
        <text>Fe(III)-heme b-[protein] + nitric oxide + H2O = Fe(II)-heme b-[protein] + nitrite + 2 H(+)</text>
        <dbReference type="Rhea" id="RHEA:77711"/>
        <dbReference type="Rhea" id="RHEA-COMP:18975"/>
        <dbReference type="Rhea" id="RHEA-COMP:18976"/>
        <dbReference type="ChEBI" id="CHEBI:15377"/>
        <dbReference type="ChEBI" id="CHEBI:15378"/>
        <dbReference type="ChEBI" id="CHEBI:16301"/>
        <dbReference type="ChEBI" id="CHEBI:16480"/>
        <dbReference type="ChEBI" id="CHEBI:55376"/>
        <dbReference type="ChEBI" id="CHEBI:60344"/>
    </reaction>
    <physiologicalReaction direction="right-to-left" evidence="2">
        <dbReference type="Rhea" id="RHEA:77713"/>
    </physiologicalReaction>
</comment>
<comment type="subunit">
    <text evidence="1 2">Monomer (By similarity). Homodimer and homotetramer; disulfide-linked. Mainly monomeric but also detected as part of homodimers and homotetramers (By similarity). Interacts with 14-3-3 proteins; regulates the phosphorylation of NGB. Could interact (ferrous form) with G-alpha(i) proteins (GTP-bound form) (By similarity).</text>
</comment>
<comment type="subcellular location">
    <subcellularLocation>
        <location evidence="1">Cytoplasm</location>
        <location evidence="1">Cytosol</location>
    </subcellularLocation>
    <subcellularLocation>
        <location evidence="1">Mitochondrion matrix</location>
    </subcellularLocation>
    <text evidence="1">Enriched in mitochondrial matrix upon oxygen-glucose deprivation.</text>
</comment>
<comment type="PTM">
    <text evidence="2">Phosphorylated during hypoxia by ERK1/ERK2. Phosphorylation regulates the heme pocket hexacoordination preventing the association of His-64 with the heme metal center. Thereby, promotes the access of dioxygen and nitrite to the heme and stimulates the nitrite reductase activity. Phosphorylation during hypoxia is stabilized by 14-3-3 proteins.</text>
</comment>
<comment type="similarity">
    <text evidence="3">Belongs to the globin family.</text>
</comment>
<name>NGB_MACMU</name>
<accession>Q6WZ20</accession>
<accession>Q3KN64</accession>
<proteinExistence type="evidence at transcript level"/>
<protein>
    <recommendedName>
        <fullName evidence="4">Neuroglobin</fullName>
    </recommendedName>
    <alternativeName>
        <fullName evidence="2">Nitrite reductase</fullName>
        <ecNumber evidence="2">1.7.-.-</ecNumber>
    </alternativeName>
</protein>
<organism>
    <name type="scientific">Macaca mulatta</name>
    <name type="common">Rhesus macaque</name>
    <dbReference type="NCBI Taxonomy" id="9544"/>
    <lineage>
        <taxon>Eukaryota</taxon>
        <taxon>Metazoa</taxon>
        <taxon>Chordata</taxon>
        <taxon>Craniata</taxon>
        <taxon>Vertebrata</taxon>
        <taxon>Euteleostomi</taxon>
        <taxon>Mammalia</taxon>
        <taxon>Eutheria</taxon>
        <taxon>Euarchontoglires</taxon>
        <taxon>Primates</taxon>
        <taxon>Haplorrhini</taxon>
        <taxon>Catarrhini</taxon>
        <taxon>Cercopithecidae</taxon>
        <taxon>Cercopithecinae</taxon>
        <taxon>Macaca</taxon>
    </lineage>
</organism>
<feature type="chain" id="PRO_0000053391" description="Neuroglobin">
    <location>
        <begin position="1"/>
        <end position="151"/>
    </location>
</feature>
<feature type="domain" description="Globin" evidence="3">
    <location>
        <begin position="1"/>
        <end position="149"/>
    </location>
</feature>
<feature type="binding site" description="distal binding residue; reversible" evidence="2 3">
    <location>
        <position position="64"/>
    </location>
    <ligand>
        <name>heme b</name>
        <dbReference type="ChEBI" id="CHEBI:60344"/>
    </ligand>
    <ligandPart>
        <name>Fe</name>
        <dbReference type="ChEBI" id="CHEBI:18248"/>
    </ligandPart>
</feature>
<feature type="binding site" description="proximal binding residue" evidence="2 3">
    <location>
        <position position="96"/>
    </location>
    <ligand>
        <name>heme b</name>
        <dbReference type="ChEBI" id="CHEBI:60344"/>
    </ligand>
    <ligandPart>
        <name>Fe</name>
        <dbReference type="ChEBI" id="CHEBI:18248"/>
    </ligandPart>
</feature>
<sequence>MERPEPELIRQSWRAVSRSPLEHGTVLFARLFALEPDLLPLFQYNCRQFSSPEDCLSSPEFLDHIRKVMLVIDAAVTNVEDLSSLEEYLASLGRKHRAVGVKLSSFSTVGESLLYMLEKCLGPAFTPATRAAWSQLYGAVVQAMSRGWDSE</sequence>
<keyword id="KW-0963">Cytoplasm</keyword>
<keyword id="KW-1015">Disulfide bond</keyword>
<keyword id="KW-0349">Heme</keyword>
<keyword id="KW-0408">Iron</keyword>
<keyword id="KW-0479">Metal-binding</keyword>
<keyword id="KW-0496">Mitochondrion</keyword>
<keyword id="KW-0560">Oxidoreductase</keyword>
<keyword id="KW-1185">Reference proteome</keyword>
<reference key="1">
    <citation type="journal article" date="2004" name="IUBMB Life">
        <title>Neuroglobin and cytoglobin: genes, proteins and evolution.</title>
        <authorList>
            <person name="Burmester T."/>
            <person name="Haberkamp M."/>
            <person name="Mitz S."/>
            <person name="Roesner A."/>
            <person name="Schmidt M."/>
            <person name="Ebner B."/>
            <person name="Gerlach F."/>
            <person name="Fuchs C."/>
            <person name="Hankeln T."/>
        </authorList>
    </citation>
    <scope>NUCLEOTIDE SEQUENCE [MRNA]</scope>
</reference>
<dbReference type="EC" id="1.7.-.-" evidence="2"/>
<dbReference type="EMBL" id="BN000827">
    <property type="protein sequence ID" value="CAJ30482.1"/>
    <property type="molecule type" value="mRNA"/>
</dbReference>
<dbReference type="RefSeq" id="NP_001030591.1">
    <property type="nucleotide sequence ID" value="NM_001035514.1"/>
</dbReference>
<dbReference type="BMRB" id="Q6WZ20"/>
<dbReference type="SMR" id="Q6WZ20"/>
<dbReference type="FunCoup" id="Q6WZ20">
    <property type="interactions" value="63"/>
</dbReference>
<dbReference type="STRING" id="9544.ENSMMUP00000056314"/>
<dbReference type="PaxDb" id="9544-ENSMMUP00000001458"/>
<dbReference type="Ensembl" id="ENSMMUT00000072435.2">
    <property type="protein sequence ID" value="ENSMMUP00000056314.1"/>
    <property type="gene ID" value="ENSMMUG00000048130.2"/>
</dbReference>
<dbReference type="GeneID" id="641331"/>
<dbReference type="KEGG" id="mcc:641331"/>
<dbReference type="CTD" id="58157"/>
<dbReference type="VEuPathDB" id="HostDB:ENSMMUG00000048130"/>
<dbReference type="VGNC" id="VGNC:84408">
    <property type="gene designation" value="NGB"/>
</dbReference>
<dbReference type="eggNOG" id="KOG3378">
    <property type="taxonomic scope" value="Eukaryota"/>
</dbReference>
<dbReference type="GeneTree" id="ENSGT00510000048375"/>
<dbReference type="HOGENOM" id="CLU_003827_13_5_1"/>
<dbReference type="InParanoid" id="Q6WZ20"/>
<dbReference type="OMA" id="GRKLMAM"/>
<dbReference type="OrthoDB" id="436496at2759"/>
<dbReference type="TreeFam" id="TF333247"/>
<dbReference type="Proteomes" id="UP000006718">
    <property type="component" value="Chromosome 7"/>
</dbReference>
<dbReference type="Bgee" id="ENSMMUG00000048130">
    <property type="expression patterns" value="Expressed in dorsolateral prefrontal cortex and 6 other cell types or tissues"/>
</dbReference>
<dbReference type="ExpressionAtlas" id="Q6WZ20">
    <property type="expression patterns" value="baseline"/>
</dbReference>
<dbReference type="GO" id="GO:0005829">
    <property type="term" value="C:cytosol"/>
    <property type="evidence" value="ECO:0007669"/>
    <property type="project" value="UniProtKB-SubCell"/>
</dbReference>
<dbReference type="GO" id="GO:0005759">
    <property type="term" value="C:mitochondrial matrix"/>
    <property type="evidence" value="ECO:0007669"/>
    <property type="project" value="UniProtKB-SubCell"/>
</dbReference>
<dbReference type="GO" id="GO:0005092">
    <property type="term" value="F:GDP-dissociation inhibitor activity"/>
    <property type="evidence" value="ECO:0000250"/>
    <property type="project" value="UniProtKB"/>
</dbReference>
<dbReference type="GO" id="GO:0020037">
    <property type="term" value="F:heme binding"/>
    <property type="evidence" value="ECO:0007669"/>
    <property type="project" value="InterPro"/>
</dbReference>
<dbReference type="GO" id="GO:0046872">
    <property type="term" value="F:metal ion binding"/>
    <property type="evidence" value="ECO:0007669"/>
    <property type="project" value="UniProtKB-KW"/>
</dbReference>
<dbReference type="GO" id="GO:0098809">
    <property type="term" value="F:nitrite reductase activity"/>
    <property type="evidence" value="ECO:0000250"/>
    <property type="project" value="UniProtKB"/>
</dbReference>
<dbReference type="GO" id="GO:0019825">
    <property type="term" value="F:oxygen binding"/>
    <property type="evidence" value="ECO:0000250"/>
    <property type="project" value="UniProtKB"/>
</dbReference>
<dbReference type="GO" id="GO:0005344">
    <property type="term" value="F:oxygen carrier activity"/>
    <property type="evidence" value="ECO:0000318"/>
    <property type="project" value="GO_Central"/>
</dbReference>
<dbReference type="GO" id="GO:0071456">
    <property type="term" value="P:cellular response to hypoxia"/>
    <property type="evidence" value="ECO:0000250"/>
    <property type="project" value="UniProtKB"/>
</dbReference>
<dbReference type="GO" id="GO:0015671">
    <property type="term" value="P:oxygen transport"/>
    <property type="evidence" value="ECO:0000318"/>
    <property type="project" value="GO_Central"/>
</dbReference>
<dbReference type="GO" id="GO:0001666">
    <property type="term" value="P:response to hypoxia"/>
    <property type="evidence" value="ECO:0000318"/>
    <property type="project" value="GO_Central"/>
</dbReference>
<dbReference type="CDD" id="cd08920">
    <property type="entry name" value="Ngb"/>
    <property type="match status" value="1"/>
</dbReference>
<dbReference type="FunFam" id="1.10.490.10:FF:000006">
    <property type="entry name" value="Neuroglobin"/>
    <property type="match status" value="1"/>
</dbReference>
<dbReference type="Gene3D" id="1.10.490.10">
    <property type="entry name" value="Globins"/>
    <property type="match status" value="1"/>
</dbReference>
<dbReference type="InterPro" id="IPR000971">
    <property type="entry name" value="Globin"/>
</dbReference>
<dbReference type="InterPro" id="IPR050532">
    <property type="entry name" value="Globin-like_OT"/>
</dbReference>
<dbReference type="InterPro" id="IPR009050">
    <property type="entry name" value="Globin-like_sf"/>
</dbReference>
<dbReference type="InterPro" id="IPR012292">
    <property type="entry name" value="Globin/Proto"/>
</dbReference>
<dbReference type="PANTHER" id="PTHR46458">
    <property type="entry name" value="BLR2807 PROTEIN"/>
    <property type="match status" value="1"/>
</dbReference>
<dbReference type="PANTHER" id="PTHR46458:SF19">
    <property type="entry name" value="NEUROGLOBIN"/>
    <property type="match status" value="1"/>
</dbReference>
<dbReference type="Pfam" id="PF00042">
    <property type="entry name" value="Globin"/>
    <property type="match status" value="1"/>
</dbReference>
<dbReference type="SUPFAM" id="SSF46458">
    <property type="entry name" value="Globin-like"/>
    <property type="match status" value="1"/>
</dbReference>
<dbReference type="PROSITE" id="PS01033">
    <property type="entry name" value="GLOBIN"/>
    <property type="match status" value="1"/>
</dbReference>
<gene>
    <name evidence="2" type="primary">NGB</name>
</gene>
<evidence type="ECO:0000250" key="1">
    <source>
        <dbReference type="UniProtKB" id="Q9ER97"/>
    </source>
</evidence>
<evidence type="ECO:0000250" key="2">
    <source>
        <dbReference type="UniProtKB" id="Q9NPG2"/>
    </source>
</evidence>
<evidence type="ECO:0000255" key="3">
    <source>
        <dbReference type="PROSITE-ProRule" id="PRU00238"/>
    </source>
</evidence>
<evidence type="ECO:0000303" key="4">
    <source>
    </source>
</evidence>